<accession>F0ZL92</accession>
<organism>
    <name type="scientific">Dictyostelium purpureum</name>
    <name type="common">Slime mold</name>
    <dbReference type="NCBI Taxonomy" id="5786"/>
    <lineage>
        <taxon>Eukaryota</taxon>
        <taxon>Amoebozoa</taxon>
        <taxon>Evosea</taxon>
        <taxon>Eumycetozoa</taxon>
        <taxon>Dictyostelia</taxon>
        <taxon>Dictyosteliales</taxon>
        <taxon>Dictyosteliaceae</taxon>
        <taxon>Dictyostelium</taxon>
    </lineage>
</organism>
<evidence type="ECO:0000250" key="1">
    <source>
        <dbReference type="UniProtKB" id="Q54BE5"/>
    </source>
</evidence>
<evidence type="ECO:0000250" key="2">
    <source>
        <dbReference type="UniProtKB" id="Q55E23"/>
    </source>
</evidence>
<evidence type="ECO:0000269" key="3">
    <source>
    </source>
</evidence>
<evidence type="ECO:0000303" key="4">
    <source>
    </source>
</evidence>
<evidence type="ECO:0000305" key="5"/>
<sequence>MNLTLKDFHVPNEWNVKSINDNSFIQECYQKAIEMNIYDKSDEKGKAVMYHALTVCPAFWPTVTYDQLVLSGYLMLWLILFDDDLDTVFIPDDEATEIINRTELIFLEGILPTNPTKKEEFTLFFRNQVLKMSGNRLDMFNLFLNYTIQWIHSIIPLNKTIEPHMDLFLFIRKLNVGVYPLIGLSCIFFSNDKIDQSLFLNPRWLKLCEATSIVTALYNDCVSYAKEVKGNAGVNNCLWFLQKKNNTSIQDTFKYICEKSNMYIKEFQNHEEKLLNQYNNIQPLATLLNSLKYIMNGKYYWSMNTARYASPSSPFIEIQNAVSPDNKLINNEL</sequence>
<reference key="1">
    <citation type="journal article" date="2018" name="Sci. Rep.">
        <title>Diversity and Functional Evolution of Terpene Synthases in Dictyostelid Social Amoebae.</title>
        <authorList>
            <person name="Chen X."/>
            <person name="Kollner T.G."/>
            <person name="Shaulsky G."/>
            <person name="Jia Q."/>
            <person name="Dickschat J.S."/>
            <person name="Gershenzon J."/>
            <person name="Chen F."/>
        </authorList>
    </citation>
    <scope>NUCLEOTIDE SEQUENCE [MRNA]</scope>
    <scope>FUNCTION</scope>
    <scope>CATALYTIC ACTIVITY</scope>
    <source>
        <strain>AX1</strain>
    </source>
</reference>
<reference key="2">
    <citation type="journal article" date="2011" name="Genome Biol.">
        <title>Comparative genomics of the social amoebae Dictyostelium discoideum and Dictyostelium purpureum.</title>
        <authorList>
            <consortium name="US DOE Joint Genome Institute (JGI-PGF)"/>
            <person name="Sucgang R."/>
            <person name="Kuo A."/>
            <person name="Tian X."/>
            <person name="Salerno W."/>
            <person name="Parikh A."/>
            <person name="Feasley C.L."/>
            <person name="Dalin E."/>
            <person name="Tu H."/>
            <person name="Huang E."/>
            <person name="Barry K."/>
            <person name="Lindquist E."/>
            <person name="Shapiro H."/>
            <person name="Bruce D."/>
            <person name="Schmutz J."/>
            <person name="Salamov A."/>
            <person name="Fey P."/>
            <person name="Gaudet P."/>
            <person name="Anjard C."/>
            <person name="Babu M.M."/>
            <person name="Basu S."/>
            <person name="Bushmanova Y."/>
            <person name="van der Wel H."/>
            <person name="Katoh-Kurasawa M."/>
            <person name="Dinh C."/>
            <person name="Coutinho P.M."/>
            <person name="Saito T."/>
            <person name="Elias M."/>
            <person name="Schaap P."/>
            <person name="Kay R.R."/>
            <person name="Henrissat B."/>
            <person name="Eichinger L."/>
            <person name="Rivero F."/>
            <person name="Putnam N.H."/>
            <person name="West C.M."/>
            <person name="Loomis W.F."/>
            <person name="Chisholm R.L."/>
            <person name="Shaulsky G."/>
            <person name="Strassmann J.E."/>
            <person name="Queller D.C."/>
            <person name="Kuspa A."/>
            <person name="Grigoriev I.V."/>
        </authorList>
    </citation>
    <scope>NUCLEOTIDE SEQUENCE [LARGE SCALE GENOMIC DNA]</scope>
    <source>
        <strain>QSDP1</strain>
    </source>
</reference>
<name>TPS2_DICPU</name>
<dbReference type="EC" id="4.2.3.-" evidence="3"/>
<dbReference type="EC" id="4.2.3.47" evidence="3"/>
<dbReference type="EMBL" id="MG262463">
    <property type="protein sequence ID" value="AXN72971.1"/>
    <property type="molecule type" value="mRNA"/>
</dbReference>
<dbReference type="EMBL" id="GL871065">
    <property type="protein sequence ID" value="EGC35260.1"/>
    <property type="molecule type" value="Genomic_DNA"/>
</dbReference>
<dbReference type="RefSeq" id="XP_003288186.1">
    <property type="nucleotide sequence ID" value="XM_003288138.1"/>
</dbReference>
<dbReference type="SMR" id="F0ZL92"/>
<dbReference type="EnsemblProtists" id="EGC35260">
    <property type="protein sequence ID" value="EGC35260"/>
    <property type="gene ID" value="DICPUDRAFT_33678"/>
</dbReference>
<dbReference type="GeneID" id="10501603"/>
<dbReference type="KEGG" id="dpp:DICPUDRAFT_33678"/>
<dbReference type="VEuPathDB" id="AmoebaDB:DICPUDRAFT_33678"/>
<dbReference type="eggNOG" id="ENOG502RCXD">
    <property type="taxonomic scope" value="Eukaryota"/>
</dbReference>
<dbReference type="InParanoid" id="F0ZL92"/>
<dbReference type="OMA" id="AIEMNIY"/>
<dbReference type="OrthoDB" id="22440at2759"/>
<dbReference type="Proteomes" id="UP000001064">
    <property type="component" value="Unassembled WGS sequence"/>
</dbReference>
<dbReference type="GO" id="GO:0046872">
    <property type="term" value="F:metal ion binding"/>
    <property type="evidence" value="ECO:0007669"/>
    <property type="project" value="UniProtKB-KW"/>
</dbReference>
<dbReference type="GO" id="GO:0010333">
    <property type="term" value="F:terpene synthase activity"/>
    <property type="evidence" value="ECO:0000318"/>
    <property type="project" value="GO_Central"/>
</dbReference>
<dbReference type="GO" id="GO:0046246">
    <property type="term" value="P:terpene biosynthetic process"/>
    <property type="evidence" value="ECO:0007669"/>
    <property type="project" value="UniProtKB-ARBA"/>
</dbReference>
<dbReference type="FunFam" id="1.10.600.10:FF:000047">
    <property type="entry name" value="Terpene synthase"/>
    <property type="match status" value="1"/>
</dbReference>
<dbReference type="Gene3D" id="1.10.600.10">
    <property type="entry name" value="Farnesyl Diphosphate Synthase"/>
    <property type="match status" value="1"/>
</dbReference>
<dbReference type="InterPro" id="IPR008949">
    <property type="entry name" value="Isoprenoid_synthase_dom_sf"/>
</dbReference>
<dbReference type="InterPro" id="IPR034686">
    <property type="entry name" value="Terpene_cyclase-like_2"/>
</dbReference>
<dbReference type="PANTHER" id="PTHR35201:SF4">
    <property type="entry name" value="BETA-PINACENE SYNTHASE-RELATED"/>
    <property type="match status" value="1"/>
</dbReference>
<dbReference type="PANTHER" id="PTHR35201">
    <property type="entry name" value="TERPENE SYNTHASE"/>
    <property type="match status" value="1"/>
</dbReference>
<dbReference type="Pfam" id="PF19086">
    <property type="entry name" value="Terpene_syn_C_2"/>
    <property type="match status" value="1"/>
</dbReference>
<dbReference type="SUPFAM" id="SSF48576">
    <property type="entry name" value="Terpenoid synthases"/>
    <property type="match status" value="1"/>
</dbReference>
<keyword id="KW-0456">Lyase</keyword>
<keyword id="KW-0479">Metal-binding</keyword>
<keyword id="KW-1185">Reference proteome</keyword>
<comment type="function">
    <text evidence="3">Terpene synthase that converts its substrate farnesyl diphosphate (FPP) into the sesquiterpene (E)-beta-farnesene as major product (PubMed:30254228). Is also able to convert FPP into delta-elemene, beta-elemene, (E)-beta-caryophyllene, 9-epi-(E)-caryophyllene, and a yet unidentified sesquiterpene (PubMed:30254228).</text>
</comment>
<comment type="catalytic activity">
    <reaction evidence="3">
        <text>(2E,6E)-farnesyl diphosphate = (E)-beta-farnesene + diphosphate</text>
        <dbReference type="Rhea" id="RHEA:27425"/>
        <dbReference type="ChEBI" id="CHEBI:10418"/>
        <dbReference type="ChEBI" id="CHEBI:33019"/>
        <dbReference type="ChEBI" id="CHEBI:175763"/>
        <dbReference type="EC" id="4.2.3.47"/>
    </reaction>
    <physiologicalReaction direction="left-to-right" evidence="3">
        <dbReference type="Rhea" id="RHEA:27426"/>
    </physiologicalReaction>
</comment>
<comment type="catalytic activity">
    <reaction evidence="3">
        <text>(2E,6E)-farnesyl diphosphate = (1S,2S,4R)-beta-elemene + diphosphate</text>
        <dbReference type="Rhea" id="RHEA:68712"/>
        <dbReference type="ChEBI" id="CHEBI:33019"/>
        <dbReference type="ChEBI" id="CHEBI:62855"/>
        <dbReference type="ChEBI" id="CHEBI:175763"/>
    </reaction>
    <physiologicalReaction direction="left-to-right" evidence="3">
        <dbReference type="Rhea" id="RHEA:68713"/>
    </physiologicalReaction>
</comment>
<comment type="domain">
    <text evidence="2">Contains several highly conserved motifs that are important for catalytic activity including the aspartate-rich 'DDxx(x)D/E' motif and the 'NDxxSxxxD/E' motif, both of which are involved in complexing metal ions to coordinate the binding of the isoprenyl diphosphate substrate in the active site.</text>
</comment>
<comment type="similarity">
    <text evidence="5">Belongs to the terpene synthase family.</text>
</comment>
<feature type="chain" id="PRO_0000457019" description="Terpene synthase 2">
    <location>
        <begin position="1"/>
        <end position="333"/>
    </location>
</feature>
<feature type="short sequence motif" description="DDxx(x)D/E motif" evidence="1">
    <location>
        <begin position="82"/>
        <end position="87"/>
    </location>
</feature>
<feature type="short sequence motif" description="NDxxSxxxD/E motif" evidence="1">
    <location>
        <begin position="219"/>
        <end position="227"/>
    </location>
</feature>
<proteinExistence type="evidence at protein level"/>
<gene>
    <name evidence="4" type="primary">TPS2</name>
    <name type="ORF">DICPUDRAFT_33678</name>
</gene>
<protein>
    <recommendedName>
        <fullName evidence="4">Terpene synthase 2</fullName>
        <ecNumber evidence="3">4.2.3.-</ecNumber>
        <ecNumber evidence="3">4.2.3.47</ecNumber>
    </recommendedName>
</protein>